<name>FPG_XANOM</name>
<protein>
    <recommendedName>
        <fullName evidence="2">Formamidopyrimidine-DNA glycosylase</fullName>
        <shortName evidence="2">Fapy-DNA glycosylase</shortName>
        <ecNumber evidence="2">3.2.2.23</ecNumber>
    </recommendedName>
    <alternativeName>
        <fullName evidence="2">DNA-(apurinic or apyrimidinic site) lyase MutM</fullName>
        <shortName evidence="2">AP lyase MutM</shortName>
        <ecNumber evidence="2">4.2.99.18</ecNumber>
    </alternativeName>
</protein>
<proteinExistence type="inferred from homology"/>
<evidence type="ECO:0000250" key="1"/>
<evidence type="ECO:0000255" key="2">
    <source>
        <dbReference type="HAMAP-Rule" id="MF_00103"/>
    </source>
</evidence>
<gene>
    <name evidence="2" type="primary">mutM</name>
    <name evidence="2" type="synonym">fpg</name>
    <name type="ordered locus">XOO0270</name>
</gene>
<keyword id="KW-0227">DNA damage</keyword>
<keyword id="KW-0234">DNA repair</keyword>
<keyword id="KW-0238">DNA-binding</keyword>
<keyword id="KW-0326">Glycosidase</keyword>
<keyword id="KW-0378">Hydrolase</keyword>
<keyword id="KW-0456">Lyase</keyword>
<keyword id="KW-0479">Metal-binding</keyword>
<keyword id="KW-0511">Multifunctional enzyme</keyword>
<keyword id="KW-0862">Zinc</keyword>
<keyword id="KW-0863">Zinc-finger</keyword>
<accession>Q2P8V2</accession>
<feature type="initiator methionine" description="Removed" evidence="1">
    <location>
        <position position="1"/>
    </location>
</feature>
<feature type="chain" id="PRO_1000008790" description="Formamidopyrimidine-DNA glycosylase">
    <location>
        <begin position="2"/>
        <end position="271"/>
    </location>
</feature>
<feature type="zinc finger region" description="FPG-type" evidence="2">
    <location>
        <begin position="237"/>
        <end position="271"/>
    </location>
</feature>
<feature type="active site" description="Schiff-base intermediate with DNA" evidence="2">
    <location>
        <position position="2"/>
    </location>
</feature>
<feature type="active site" description="Proton donor" evidence="2">
    <location>
        <position position="3"/>
    </location>
</feature>
<feature type="active site" description="Proton donor; for beta-elimination activity" evidence="2">
    <location>
        <position position="58"/>
    </location>
</feature>
<feature type="active site" description="Proton donor; for delta-elimination activity" evidence="2">
    <location>
        <position position="261"/>
    </location>
</feature>
<feature type="binding site" evidence="2">
    <location>
        <position position="92"/>
    </location>
    <ligand>
        <name>DNA</name>
        <dbReference type="ChEBI" id="CHEBI:16991"/>
    </ligand>
</feature>
<feature type="binding site" evidence="2">
    <location>
        <position position="111"/>
    </location>
    <ligand>
        <name>DNA</name>
        <dbReference type="ChEBI" id="CHEBI:16991"/>
    </ligand>
</feature>
<feature type="binding site" evidence="2">
    <location>
        <position position="152"/>
    </location>
    <ligand>
        <name>DNA</name>
        <dbReference type="ChEBI" id="CHEBI:16991"/>
    </ligand>
</feature>
<reference key="1">
    <citation type="journal article" date="2005" name="Jpn. Agric. Res. Q.">
        <title>Genome sequence of Xanthomonas oryzae pv. oryzae suggests contribution of large numbers of effector genes and insertion sequences to its race diversity.</title>
        <authorList>
            <person name="Ochiai H."/>
            <person name="Inoue Y."/>
            <person name="Takeya M."/>
            <person name="Sasaki A."/>
            <person name="Kaku H."/>
        </authorList>
    </citation>
    <scope>NUCLEOTIDE SEQUENCE [LARGE SCALE GENOMIC DNA]</scope>
    <source>
        <strain>MAFF 311018</strain>
    </source>
</reference>
<dbReference type="EC" id="3.2.2.23" evidence="2"/>
<dbReference type="EC" id="4.2.99.18" evidence="2"/>
<dbReference type="EMBL" id="AP008229">
    <property type="protein sequence ID" value="BAE67025.1"/>
    <property type="molecule type" value="Genomic_DNA"/>
</dbReference>
<dbReference type="RefSeq" id="WP_011407325.1">
    <property type="nucleotide sequence ID" value="NC_007705.1"/>
</dbReference>
<dbReference type="SMR" id="Q2P8V2"/>
<dbReference type="KEGG" id="xom:XOO0270"/>
<dbReference type="HOGENOM" id="CLU_038423_1_1_6"/>
<dbReference type="GO" id="GO:0034039">
    <property type="term" value="F:8-oxo-7,8-dihydroguanine DNA N-glycosylase activity"/>
    <property type="evidence" value="ECO:0007669"/>
    <property type="project" value="TreeGrafter"/>
</dbReference>
<dbReference type="GO" id="GO:0140078">
    <property type="term" value="F:class I DNA-(apurinic or apyrimidinic site) endonuclease activity"/>
    <property type="evidence" value="ECO:0007669"/>
    <property type="project" value="UniProtKB-EC"/>
</dbReference>
<dbReference type="GO" id="GO:0003684">
    <property type="term" value="F:damaged DNA binding"/>
    <property type="evidence" value="ECO:0007669"/>
    <property type="project" value="InterPro"/>
</dbReference>
<dbReference type="GO" id="GO:0008270">
    <property type="term" value="F:zinc ion binding"/>
    <property type="evidence" value="ECO:0007669"/>
    <property type="project" value="UniProtKB-UniRule"/>
</dbReference>
<dbReference type="GO" id="GO:0006284">
    <property type="term" value="P:base-excision repair"/>
    <property type="evidence" value="ECO:0007669"/>
    <property type="project" value="InterPro"/>
</dbReference>
<dbReference type="CDD" id="cd08966">
    <property type="entry name" value="EcFpg-like_N"/>
    <property type="match status" value="1"/>
</dbReference>
<dbReference type="FunFam" id="1.10.8.50:FF:000003">
    <property type="entry name" value="Formamidopyrimidine-DNA glycosylase"/>
    <property type="match status" value="1"/>
</dbReference>
<dbReference type="FunFam" id="3.20.190.10:FF:000001">
    <property type="entry name" value="Formamidopyrimidine-DNA glycosylase"/>
    <property type="match status" value="1"/>
</dbReference>
<dbReference type="Gene3D" id="1.10.8.50">
    <property type="match status" value="1"/>
</dbReference>
<dbReference type="Gene3D" id="3.20.190.10">
    <property type="entry name" value="MutM-like, N-terminal"/>
    <property type="match status" value="1"/>
</dbReference>
<dbReference type="HAMAP" id="MF_00103">
    <property type="entry name" value="Fapy_DNA_glycosyl"/>
    <property type="match status" value="1"/>
</dbReference>
<dbReference type="InterPro" id="IPR015886">
    <property type="entry name" value="DNA_glyclase/AP_lyase_DNA-bd"/>
</dbReference>
<dbReference type="InterPro" id="IPR015887">
    <property type="entry name" value="DNA_glyclase_Znf_dom_DNA_BS"/>
</dbReference>
<dbReference type="InterPro" id="IPR020629">
    <property type="entry name" value="Formamido-pyr_DNA_Glyclase"/>
</dbReference>
<dbReference type="InterPro" id="IPR012319">
    <property type="entry name" value="FPG_cat"/>
</dbReference>
<dbReference type="InterPro" id="IPR035937">
    <property type="entry name" value="MutM-like_N-ter"/>
</dbReference>
<dbReference type="InterPro" id="IPR010979">
    <property type="entry name" value="Ribosomal_uS13-like_H2TH"/>
</dbReference>
<dbReference type="InterPro" id="IPR000214">
    <property type="entry name" value="Znf_DNA_glyclase/AP_lyase"/>
</dbReference>
<dbReference type="InterPro" id="IPR010663">
    <property type="entry name" value="Znf_FPG/IleRS"/>
</dbReference>
<dbReference type="NCBIfam" id="TIGR00577">
    <property type="entry name" value="fpg"/>
    <property type="match status" value="1"/>
</dbReference>
<dbReference type="NCBIfam" id="NF002211">
    <property type="entry name" value="PRK01103.1"/>
    <property type="match status" value="1"/>
</dbReference>
<dbReference type="PANTHER" id="PTHR22993">
    <property type="entry name" value="FORMAMIDOPYRIMIDINE-DNA GLYCOSYLASE"/>
    <property type="match status" value="1"/>
</dbReference>
<dbReference type="PANTHER" id="PTHR22993:SF9">
    <property type="entry name" value="FORMAMIDOPYRIMIDINE-DNA GLYCOSYLASE"/>
    <property type="match status" value="1"/>
</dbReference>
<dbReference type="Pfam" id="PF01149">
    <property type="entry name" value="Fapy_DNA_glyco"/>
    <property type="match status" value="1"/>
</dbReference>
<dbReference type="Pfam" id="PF06831">
    <property type="entry name" value="H2TH"/>
    <property type="match status" value="1"/>
</dbReference>
<dbReference type="Pfam" id="PF06827">
    <property type="entry name" value="zf-FPG_IleRS"/>
    <property type="match status" value="1"/>
</dbReference>
<dbReference type="SMART" id="SM00898">
    <property type="entry name" value="Fapy_DNA_glyco"/>
    <property type="match status" value="1"/>
</dbReference>
<dbReference type="SMART" id="SM01232">
    <property type="entry name" value="H2TH"/>
    <property type="match status" value="1"/>
</dbReference>
<dbReference type="SUPFAM" id="SSF57716">
    <property type="entry name" value="Glucocorticoid receptor-like (DNA-binding domain)"/>
    <property type="match status" value="1"/>
</dbReference>
<dbReference type="SUPFAM" id="SSF81624">
    <property type="entry name" value="N-terminal domain of MutM-like DNA repair proteins"/>
    <property type="match status" value="1"/>
</dbReference>
<dbReference type="SUPFAM" id="SSF46946">
    <property type="entry name" value="S13-like H2TH domain"/>
    <property type="match status" value="1"/>
</dbReference>
<dbReference type="PROSITE" id="PS51068">
    <property type="entry name" value="FPG_CAT"/>
    <property type="match status" value="1"/>
</dbReference>
<dbReference type="PROSITE" id="PS01242">
    <property type="entry name" value="ZF_FPG_1"/>
    <property type="match status" value="1"/>
</dbReference>
<dbReference type="PROSITE" id="PS51066">
    <property type="entry name" value="ZF_FPG_2"/>
    <property type="match status" value="1"/>
</dbReference>
<organism>
    <name type="scientific">Xanthomonas oryzae pv. oryzae (strain MAFF 311018)</name>
    <dbReference type="NCBI Taxonomy" id="342109"/>
    <lineage>
        <taxon>Bacteria</taxon>
        <taxon>Pseudomonadati</taxon>
        <taxon>Pseudomonadota</taxon>
        <taxon>Gammaproteobacteria</taxon>
        <taxon>Lysobacterales</taxon>
        <taxon>Lysobacteraceae</taxon>
        <taxon>Xanthomonas</taxon>
    </lineage>
</organism>
<sequence>MPELPEVETTLRGLSPHLVGQRIHGVILRRPDLRWPIPEQIERLLPGATITNVRRRAKYLLIDTDAGGSALLHLGMSGSLRVLPGDTLPRAHDHVDISLQNGRVLRFNDPRRFGCLLWQSDIQAHELLAALGPEPLSEAFTGDYLHALAYGRRAPVKTFLMDQAVVVGVGNIYAAESLHCAGISPLREAGKVSLDRYRRLAAAVKDILSYAIRRGGTTLRDFISPDGAPGYFEQELTVYGREGEPCKQCGRVLKHAMIGQRATVWCGSCQR</sequence>
<comment type="function">
    <text evidence="2">Involved in base excision repair of DNA damaged by oxidation or by mutagenic agents. Acts as a DNA glycosylase that recognizes and removes damaged bases. Has a preference for oxidized purines, such as 7,8-dihydro-8-oxoguanine (8-oxoG). Has AP (apurinic/apyrimidinic) lyase activity and introduces nicks in the DNA strand. Cleaves the DNA backbone by beta-delta elimination to generate a single-strand break at the site of the removed base with both 3'- and 5'-phosphates.</text>
</comment>
<comment type="catalytic activity">
    <reaction evidence="2">
        <text>Hydrolysis of DNA containing ring-opened 7-methylguanine residues, releasing 2,6-diamino-4-hydroxy-5-(N-methyl)formamidopyrimidine.</text>
        <dbReference type="EC" id="3.2.2.23"/>
    </reaction>
</comment>
<comment type="catalytic activity">
    <reaction evidence="2">
        <text>2'-deoxyribonucleotide-(2'-deoxyribose 5'-phosphate)-2'-deoxyribonucleotide-DNA = a 3'-end 2'-deoxyribonucleotide-(2,3-dehydro-2,3-deoxyribose 5'-phosphate)-DNA + a 5'-end 5'-phospho-2'-deoxyribonucleoside-DNA + H(+)</text>
        <dbReference type="Rhea" id="RHEA:66592"/>
        <dbReference type="Rhea" id="RHEA-COMP:13180"/>
        <dbReference type="Rhea" id="RHEA-COMP:16897"/>
        <dbReference type="Rhea" id="RHEA-COMP:17067"/>
        <dbReference type="ChEBI" id="CHEBI:15378"/>
        <dbReference type="ChEBI" id="CHEBI:136412"/>
        <dbReference type="ChEBI" id="CHEBI:157695"/>
        <dbReference type="ChEBI" id="CHEBI:167181"/>
        <dbReference type="EC" id="4.2.99.18"/>
    </reaction>
</comment>
<comment type="cofactor">
    <cofactor evidence="2">
        <name>Zn(2+)</name>
        <dbReference type="ChEBI" id="CHEBI:29105"/>
    </cofactor>
    <text evidence="2">Binds 1 zinc ion per subunit.</text>
</comment>
<comment type="subunit">
    <text evidence="2">Monomer.</text>
</comment>
<comment type="similarity">
    <text evidence="2">Belongs to the FPG family.</text>
</comment>